<sequence>FYDTTCPK</sequence>
<keyword id="KW-0106">Calcium</keyword>
<keyword id="KW-0903">Direct protein sequencing</keyword>
<keyword id="KW-0349">Heme</keyword>
<keyword id="KW-0376">Hydrogen peroxide</keyword>
<keyword id="KW-0408">Iron</keyword>
<keyword id="KW-0479">Metal-binding</keyword>
<keyword id="KW-0560">Oxidoreductase</keyword>
<keyword id="KW-0575">Peroxidase</keyword>
<keyword id="KW-0964">Secreted</keyword>
<feature type="chain" id="PRO_0000314641" description="Peroxidase 4">
    <location>
        <begin position="1" status="less than"/>
        <end position="8" status="greater than"/>
    </location>
</feature>
<feature type="non-terminal residue">
    <location>
        <position position="1"/>
    </location>
</feature>
<feature type="non-terminal residue">
    <location>
        <position position="8"/>
    </location>
</feature>
<accession>P85335</accession>
<evidence type="ECO:0000250" key="1">
    <source>
        <dbReference type="UniProtKB" id="P84516"/>
    </source>
</evidence>
<evidence type="ECO:0000255" key="2">
    <source>
        <dbReference type="PROSITE-ProRule" id="PRU00297"/>
    </source>
</evidence>
<evidence type="ECO:0000305" key="3"/>
<name>PER4_BETPN</name>
<protein>
    <recommendedName>
        <fullName>Peroxidase 4</fullName>
        <ecNumber>1.11.1.7</ecNumber>
    </recommendedName>
</protein>
<proteinExistence type="evidence at protein level"/>
<comment type="function">
    <text evidence="3">Removal of H(2)O(2), oxidation of toxic reductants, biosynthesis and degradation of lignin, suberization, auxin catabolism, response to environmental stresses such as wounding, pathogen attack and oxidative stress. These functions might be dependent on each isozyme/isoform in each plant tissue.</text>
</comment>
<comment type="catalytic activity">
    <reaction>
        <text>2 a phenolic donor + H2O2 = 2 a phenolic radical donor + 2 H2O</text>
        <dbReference type="Rhea" id="RHEA:56136"/>
        <dbReference type="ChEBI" id="CHEBI:15377"/>
        <dbReference type="ChEBI" id="CHEBI:16240"/>
        <dbReference type="ChEBI" id="CHEBI:139520"/>
        <dbReference type="ChEBI" id="CHEBI:139521"/>
        <dbReference type="EC" id="1.11.1.7"/>
    </reaction>
</comment>
<comment type="cofactor">
    <cofactor evidence="1 2">
        <name>Ca(2+)</name>
        <dbReference type="ChEBI" id="CHEBI:29108"/>
    </cofactor>
    <text evidence="1 2">Binds 2 calcium ions per subunit.</text>
</comment>
<comment type="cofactor">
    <cofactor evidence="1 2">
        <name>heme b</name>
        <dbReference type="ChEBI" id="CHEBI:60344"/>
    </cofactor>
    <text evidence="1 2">Binds 1 heme b (iron(II)-protoporphyrin IX) group per subunit.</text>
</comment>
<comment type="subcellular location">
    <subcellularLocation>
        <location evidence="1 2">Secreted</location>
    </subcellularLocation>
</comment>
<comment type="similarity">
    <text evidence="2">Belongs to the peroxidase family. Classical plant (class III) peroxidase subfamily.</text>
</comment>
<reference key="1">
    <citation type="journal article" date="2009" name="Physiol. Plantarum">
        <title>The presence of sinapyl lignin in Ginkgo biloba cell cultures changes our views of the evolution of lignin biosynthesis.</title>
        <authorList>
            <person name="Novo Uzal E."/>
            <person name="Gomez Ros L.V."/>
            <person name="Pomar F."/>
            <person name="Bernal M.A."/>
            <person name="Paradela A."/>
            <person name="Albar J.P."/>
            <person name="Ros Barcelo A."/>
        </authorList>
    </citation>
    <scope>PROTEIN SEQUENCE</scope>
    <source>
        <strain>PC-1121</strain>
        <tissue>Callus</tissue>
    </source>
</reference>
<dbReference type="EC" id="1.11.1.7"/>
<dbReference type="GO" id="GO:0005576">
    <property type="term" value="C:extracellular region"/>
    <property type="evidence" value="ECO:0007669"/>
    <property type="project" value="UniProtKB-SubCell"/>
</dbReference>
<dbReference type="GO" id="GO:0140825">
    <property type="term" value="F:lactoperoxidase activity"/>
    <property type="evidence" value="ECO:0007669"/>
    <property type="project" value="UniProtKB-EC"/>
</dbReference>
<dbReference type="GO" id="GO:0046872">
    <property type="term" value="F:metal ion binding"/>
    <property type="evidence" value="ECO:0007669"/>
    <property type="project" value="UniProtKB-KW"/>
</dbReference>
<dbReference type="GO" id="GO:0042744">
    <property type="term" value="P:hydrogen peroxide catabolic process"/>
    <property type="evidence" value="ECO:0007669"/>
    <property type="project" value="UniProtKB-KW"/>
</dbReference>
<organism>
    <name type="scientific">Betula pendula</name>
    <name type="common">European white birch</name>
    <name type="synonym">Betula verrucosa</name>
    <dbReference type="NCBI Taxonomy" id="3505"/>
    <lineage>
        <taxon>Eukaryota</taxon>
        <taxon>Viridiplantae</taxon>
        <taxon>Streptophyta</taxon>
        <taxon>Embryophyta</taxon>
        <taxon>Tracheophyta</taxon>
        <taxon>Spermatophyta</taxon>
        <taxon>Magnoliopsida</taxon>
        <taxon>eudicotyledons</taxon>
        <taxon>Gunneridae</taxon>
        <taxon>Pentapetalae</taxon>
        <taxon>rosids</taxon>
        <taxon>fabids</taxon>
        <taxon>Fagales</taxon>
        <taxon>Betulaceae</taxon>
        <taxon>Betula</taxon>
    </lineage>
</organism>